<accession>B0TYF1</accession>
<reference key="1">
    <citation type="submission" date="2007-12" db="EMBL/GenBank/DDBJ databases">
        <title>Complete sequence of chromosome of Francisella philomiragia subsp. philomiragia ATCC 25017.</title>
        <authorList>
            <consortium name="US DOE Joint Genome Institute"/>
            <person name="Copeland A."/>
            <person name="Lucas S."/>
            <person name="Lapidus A."/>
            <person name="Barry K."/>
            <person name="Detter J.C."/>
            <person name="Glavina del Rio T."/>
            <person name="Hammon N."/>
            <person name="Israni S."/>
            <person name="Dalin E."/>
            <person name="Tice H."/>
            <person name="Pitluck S."/>
            <person name="Chain P."/>
            <person name="Malfatti S."/>
            <person name="Shin M."/>
            <person name="Vergez L."/>
            <person name="Schmutz J."/>
            <person name="Larimer F."/>
            <person name="Land M."/>
            <person name="Hauser L."/>
            <person name="Richardson P."/>
        </authorList>
    </citation>
    <scope>NUCLEOTIDE SEQUENCE [LARGE SCALE GENOMIC DNA]</scope>
    <source>
        <strain>ATCC 25017 / CCUG 19701 / FSC 153 / O#319-036</strain>
    </source>
</reference>
<dbReference type="EMBL" id="CP000937">
    <property type="protein sequence ID" value="ABZ87627.1"/>
    <property type="molecule type" value="Genomic_DNA"/>
</dbReference>
<dbReference type="SMR" id="B0TYF1"/>
<dbReference type="KEGG" id="fph:Fphi_1402"/>
<dbReference type="eggNOG" id="COG0576">
    <property type="taxonomic scope" value="Bacteria"/>
</dbReference>
<dbReference type="HOGENOM" id="CLU_057217_6_0_6"/>
<dbReference type="GO" id="GO:0005829">
    <property type="term" value="C:cytosol"/>
    <property type="evidence" value="ECO:0007669"/>
    <property type="project" value="TreeGrafter"/>
</dbReference>
<dbReference type="GO" id="GO:0000774">
    <property type="term" value="F:adenyl-nucleotide exchange factor activity"/>
    <property type="evidence" value="ECO:0007669"/>
    <property type="project" value="InterPro"/>
</dbReference>
<dbReference type="GO" id="GO:0042803">
    <property type="term" value="F:protein homodimerization activity"/>
    <property type="evidence" value="ECO:0007669"/>
    <property type="project" value="InterPro"/>
</dbReference>
<dbReference type="GO" id="GO:0051087">
    <property type="term" value="F:protein-folding chaperone binding"/>
    <property type="evidence" value="ECO:0007669"/>
    <property type="project" value="InterPro"/>
</dbReference>
<dbReference type="GO" id="GO:0051082">
    <property type="term" value="F:unfolded protein binding"/>
    <property type="evidence" value="ECO:0007669"/>
    <property type="project" value="TreeGrafter"/>
</dbReference>
<dbReference type="GO" id="GO:0006457">
    <property type="term" value="P:protein folding"/>
    <property type="evidence" value="ECO:0007669"/>
    <property type="project" value="InterPro"/>
</dbReference>
<dbReference type="CDD" id="cd00446">
    <property type="entry name" value="GrpE"/>
    <property type="match status" value="1"/>
</dbReference>
<dbReference type="FunFam" id="2.30.22.10:FF:000001">
    <property type="entry name" value="Protein GrpE"/>
    <property type="match status" value="1"/>
</dbReference>
<dbReference type="Gene3D" id="3.90.20.20">
    <property type="match status" value="1"/>
</dbReference>
<dbReference type="Gene3D" id="2.30.22.10">
    <property type="entry name" value="Head domain of nucleotide exchange factor GrpE"/>
    <property type="match status" value="1"/>
</dbReference>
<dbReference type="HAMAP" id="MF_01151">
    <property type="entry name" value="GrpE"/>
    <property type="match status" value="1"/>
</dbReference>
<dbReference type="InterPro" id="IPR000740">
    <property type="entry name" value="GrpE"/>
</dbReference>
<dbReference type="InterPro" id="IPR013805">
    <property type="entry name" value="GrpE_coiled_coil"/>
</dbReference>
<dbReference type="InterPro" id="IPR009012">
    <property type="entry name" value="GrpE_head"/>
</dbReference>
<dbReference type="NCBIfam" id="NF010737">
    <property type="entry name" value="PRK14139.1"/>
    <property type="match status" value="1"/>
</dbReference>
<dbReference type="NCBIfam" id="NF010738">
    <property type="entry name" value="PRK14140.1"/>
    <property type="match status" value="1"/>
</dbReference>
<dbReference type="NCBIfam" id="NF010746">
    <property type="entry name" value="PRK14148.1"/>
    <property type="match status" value="1"/>
</dbReference>
<dbReference type="NCBIfam" id="NF010748">
    <property type="entry name" value="PRK14150.1"/>
    <property type="match status" value="1"/>
</dbReference>
<dbReference type="PANTHER" id="PTHR21237">
    <property type="entry name" value="GRPE PROTEIN"/>
    <property type="match status" value="1"/>
</dbReference>
<dbReference type="PANTHER" id="PTHR21237:SF23">
    <property type="entry name" value="GRPE PROTEIN HOMOLOG, MITOCHONDRIAL"/>
    <property type="match status" value="1"/>
</dbReference>
<dbReference type="Pfam" id="PF01025">
    <property type="entry name" value="GrpE"/>
    <property type="match status" value="1"/>
</dbReference>
<dbReference type="PRINTS" id="PR00773">
    <property type="entry name" value="GRPEPROTEIN"/>
</dbReference>
<dbReference type="SUPFAM" id="SSF58014">
    <property type="entry name" value="Coiled-coil domain of nucleotide exchange factor GrpE"/>
    <property type="match status" value="1"/>
</dbReference>
<dbReference type="SUPFAM" id="SSF51064">
    <property type="entry name" value="Head domain of nucleotide exchange factor GrpE"/>
    <property type="match status" value="1"/>
</dbReference>
<dbReference type="PROSITE" id="PS01071">
    <property type="entry name" value="GRPE"/>
    <property type="match status" value="1"/>
</dbReference>
<keyword id="KW-0143">Chaperone</keyword>
<keyword id="KW-0963">Cytoplasm</keyword>
<keyword id="KW-0346">Stress response</keyword>
<name>GRPE_FRAP2</name>
<feature type="chain" id="PRO_1000085114" description="Protein GrpE">
    <location>
        <begin position="1"/>
        <end position="191"/>
    </location>
</feature>
<feature type="region of interest" description="Disordered" evidence="2">
    <location>
        <begin position="1"/>
        <end position="35"/>
    </location>
</feature>
<feature type="compositionally biased region" description="Basic and acidic residues" evidence="2">
    <location>
        <begin position="1"/>
        <end position="15"/>
    </location>
</feature>
<sequence>MGKEEKNNIEDKALDNEQEMDQESTSKAVEELSIEEQLERARDTIKELEETCDSFKDEALRARAEMENVRKRAERDVSNARKFGIEKFAKELLPVIDSIEQALKHEVKLEEAIAMKEGIELTSKMLVDTLKKNGLEELDPKGEKFDPNLHEAMAMIPNSEFEDNTIFDVFQKGYMLNGRVVRAAKVVIVKN</sequence>
<proteinExistence type="inferred from homology"/>
<organism>
    <name type="scientific">Francisella philomiragia subsp. philomiragia (strain ATCC 25017 / CCUG 19701 / FSC 153 / O#319-036)</name>
    <dbReference type="NCBI Taxonomy" id="484022"/>
    <lineage>
        <taxon>Bacteria</taxon>
        <taxon>Pseudomonadati</taxon>
        <taxon>Pseudomonadota</taxon>
        <taxon>Gammaproteobacteria</taxon>
        <taxon>Thiotrichales</taxon>
        <taxon>Francisellaceae</taxon>
        <taxon>Francisella</taxon>
    </lineage>
</organism>
<gene>
    <name evidence="1" type="primary">grpE</name>
    <name type="ordered locus">Fphi_1402</name>
</gene>
<comment type="function">
    <text evidence="1">Participates actively in the response to hyperosmotic and heat shock by preventing the aggregation of stress-denatured proteins, in association with DnaK and GrpE. It is the nucleotide exchange factor for DnaK and may function as a thermosensor. Unfolded proteins bind initially to DnaJ; upon interaction with the DnaJ-bound protein, DnaK hydrolyzes its bound ATP, resulting in the formation of a stable complex. GrpE releases ADP from DnaK; ATP binding to DnaK triggers the release of the substrate protein, thus completing the reaction cycle. Several rounds of ATP-dependent interactions between DnaJ, DnaK and GrpE are required for fully efficient folding.</text>
</comment>
<comment type="subunit">
    <text evidence="1">Homodimer.</text>
</comment>
<comment type="subcellular location">
    <subcellularLocation>
        <location evidence="1">Cytoplasm</location>
    </subcellularLocation>
</comment>
<comment type="similarity">
    <text evidence="1">Belongs to the GrpE family.</text>
</comment>
<evidence type="ECO:0000255" key="1">
    <source>
        <dbReference type="HAMAP-Rule" id="MF_01151"/>
    </source>
</evidence>
<evidence type="ECO:0000256" key="2">
    <source>
        <dbReference type="SAM" id="MobiDB-lite"/>
    </source>
</evidence>
<protein>
    <recommendedName>
        <fullName evidence="1">Protein GrpE</fullName>
    </recommendedName>
    <alternativeName>
        <fullName evidence="1">HSP-70 cofactor</fullName>
    </alternativeName>
</protein>